<proteinExistence type="inferred from homology"/>
<comment type="function">
    <text evidence="1">Catalyzes the attachment of proline to tRNA(Pro) in a two-step reaction: proline is first activated by ATP to form Pro-AMP and then transferred to the acceptor end of tRNA(Pro).</text>
</comment>
<comment type="catalytic activity">
    <reaction evidence="1">
        <text>tRNA(Pro) + L-proline + ATP = L-prolyl-tRNA(Pro) + AMP + diphosphate</text>
        <dbReference type="Rhea" id="RHEA:14305"/>
        <dbReference type="Rhea" id="RHEA-COMP:9700"/>
        <dbReference type="Rhea" id="RHEA-COMP:9702"/>
        <dbReference type="ChEBI" id="CHEBI:30616"/>
        <dbReference type="ChEBI" id="CHEBI:33019"/>
        <dbReference type="ChEBI" id="CHEBI:60039"/>
        <dbReference type="ChEBI" id="CHEBI:78442"/>
        <dbReference type="ChEBI" id="CHEBI:78532"/>
        <dbReference type="ChEBI" id="CHEBI:456215"/>
        <dbReference type="EC" id="6.1.1.15"/>
    </reaction>
</comment>
<comment type="subunit">
    <text evidence="1">Homodimer.</text>
</comment>
<comment type="subcellular location">
    <subcellularLocation>
        <location evidence="1">Cytoplasm</location>
    </subcellularLocation>
</comment>
<comment type="domain">
    <text evidence="1">Consists of three domains: the N-terminal catalytic domain, the anticodon-binding domain and the C-terminal extension.</text>
</comment>
<comment type="similarity">
    <text evidence="1">Belongs to the class-II aminoacyl-tRNA synthetase family. ProS type 3 subfamily.</text>
</comment>
<feature type="chain" id="PRO_0000249118" description="Proline--tRNA ligase 2">
    <location>
        <begin position="1"/>
        <end position="476"/>
    </location>
</feature>
<sequence length="476" mass="54747">MAKEQVQAITKMEEDFAQWYTDIVKKAELVDYSSVKGCMILRPYGYALWENMQKVMDEKLKETGHENVYMPMFIPESLLQKEKDHVEGFAPEVAWVTHGGDEKLAERLCVRPTSETLFCEHFSKIVQSYNDLPKLYNQWCSVVRWEKTTRPFLRTTEFLWQEGHTIHETAEESQAETLNILNLYASFCEDYLAIPVIKGQKTEKEKFAGAKATYTIESLMHDGKALQTGTSHNFGTNFSEAFDIKFLDRNGKWQYVHQTSWGVSTRMIGGLIMVHSDNNGLVLPPKVAPVQVVIVPIAQHKEGVLAKATELQAHIQKVARVKIDASNKTPGWKFNEYEMKGIPIRLEVGPKDIEKNQVVLVRRDTKEKEFVPMDQLEERIPALLEEIHIALFNKAKAFRDENTYVATNFEEMKKIADEKQGFIKAMWCGELACEEKLKEEFGVSSRCMPFEQEHLAEECICCGKEAKQMVYWGKAY</sequence>
<gene>
    <name evidence="1" type="primary">proS2</name>
    <name type="ordered locus">BC_0439</name>
</gene>
<keyword id="KW-0030">Aminoacyl-tRNA synthetase</keyword>
<keyword id="KW-0067">ATP-binding</keyword>
<keyword id="KW-0963">Cytoplasm</keyword>
<keyword id="KW-0436">Ligase</keyword>
<keyword id="KW-0547">Nucleotide-binding</keyword>
<keyword id="KW-0648">Protein biosynthesis</keyword>
<keyword id="KW-1185">Reference proteome</keyword>
<accession>Q81IE9</accession>
<reference key="1">
    <citation type="journal article" date="2003" name="Nature">
        <title>Genome sequence of Bacillus cereus and comparative analysis with Bacillus anthracis.</title>
        <authorList>
            <person name="Ivanova N."/>
            <person name="Sorokin A."/>
            <person name="Anderson I."/>
            <person name="Galleron N."/>
            <person name="Candelon B."/>
            <person name="Kapatral V."/>
            <person name="Bhattacharyya A."/>
            <person name="Reznik G."/>
            <person name="Mikhailova N."/>
            <person name="Lapidus A."/>
            <person name="Chu L."/>
            <person name="Mazur M."/>
            <person name="Goltsman E."/>
            <person name="Larsen N."/>
            <person name="D'Souza M."/>
            <person name="Walunas T."/>
            <person name="Grechkin Y."/>
            <person name="Pusch G."/>
            <person name="Haselkorn R."/>
            <person name="Fonstein M."/>
            <person name="Ehrlich S.D."/>
            <person name="Overbeek R."/>
            <person name="Kyrpides N.C."/>
        </authorList>
    </citation>
    <scope>NUCLEOTIDE SEQUENCE [LARGE SCALE GENOMIC DNA]</scope>
    <source>
        <strain>ATCC 14579 / DSM 31 / CCUG 7414 / JCM 2152 / NBRC 15305 / NCIMB 9373 / NCTC 2599 / NRRL B-3711</strain>
    </source>
</reference>
<protein>
    <recommendedName>
        <fullName evidence="1">Proline--tRNA ligase 2</fullName>
        <ecNumber evidence="1">6.1.1.15</ecNumber>
    </recommendedName>
    <alternativeName>
        <fullName evidence="1">Prolyl-tRNA synthetase 2</fullName>
        <shortName evidence="1">ProRS 2</shortName>
    </alternativeName>
</protein>
<dbReference type="EC" id="6.1.1.15" evidence="1"/>
<dbReference type="EMBL" id="AE016877">
    <property type="protein sequence ID" value="AAP07479.1"/>
    <property type="molecule type" value="Genomic_DNA"/>
</dbReference>
<dbReference type="RefSeq" id="NP_830278.1">
    <property type="nucleotide sequence ID" value="NC_004722.1"/>
</dbReference>
<dbReference type="RefSeq" id="WP_001040972.1">
    <property type="nucleotide sequence ID" value="NC_004722.1"/>
</dbReference>
<dbReference type="SMR" id="Q81IE9"/>
<dbReference type="STRING" id="226900.BC_0439"/>
<dbReference type="KEGG" id="bce:BC0439"/>
<dbReference type="PATRIC" id="fig|226900.8.peg.409"/>
<dbReference type="HOGENOM" id="CLU_001882_4_2_9"/>
<dbReference type="OrthoDB" id="9809052at2"/>
<dbReference type="Proteomes" id="UP000001417">
    <property type="component" value="Chromosome"/>
</dbReference>
<dbReference type="GO" id="GO:0017101">
    <property type="term" value="C:aminoacyl-tRNA synthetase multienzyme complex"/>
    <property type="evidence" value="ECO:0000318"/>
    <property type="project" value="GO_Central"/>
</dbReference>
<dbReference type="GO" id="GO:0005737">
    <property type="term" value="C:cytoplasm"/>
    <property type="evidence" value="ECO:0000318"/>
    <property type="project" value="GO_Central"/>
</dbReference>
<dbReference type="GO" id="GO:0005524">
    <property type="term" value="F:ATP binding"/>
    <property type="evidence" value="ECO:0007669"/>
    <property type="project" value="UniProtKB-UniRule"/>
</dbReference>
<dbReference type="GO" id="GO:0140096">
    <property type="term" value="F:catalytic activity, acting on a protein"/>
    <property type="evidence" value="ECO:0007669"/>
    <property type="project" value="UniProtKB-ARBA"/>
</dbReference>
<dbReference type="GO" id="GO:0004827">
    <property type="term" value="F:proline-tRNA ligase activity"/>
    <property type="evidence" value="ECO:0000318"/>
    <property type="project" value="GO_Central"/>
</dbReference>
<dbReference type="GO" id="GO:0016740">
    <property type="term" value="F:transferase activity"/>
    <property type="evidence" value="ECO:0007669"/>
    <property type="project" value="UniProtKB-ARBA"/>
</dbReference>
<dbReference type="GO" id="GO:0006433">
    <property type="term" value="P:prolyl-tRNA aminoacylation"/>
    <property type="evidence" value="ECO:0000318"/>
    <property type="project" value="GO_Central"/>
</dbReference>
<dbReference type="CDD" id="cd00862">
    <property type="entry name" value="ProRS_anticodon_zinc"/>
    <property type="match status" value="1"/>
</dbReference>
<dbReference type="CDD" id="cd00778">
    <property type="entry name" value="ProRS_core_arch_euk"/>
    <property type="match status" value="1"/>
</dbReference>
<dbReference type="FunFam" id="3.40.50.800:FF:000005">
    <property type="entry name" value="bifunctional glutamate/proline--tRNA ligase"/>
    <property type="match status" value="1"/>
</dbReference>
<dbReference type="FunFam" id="3.30.110.30:FF:000005">
    <property type="entry name" value="Proline--tRNA ligase"/>
    <property type="match status" value="1"/>
</dbReference>
<dbReference type="FunFam" id="3.30.930.10:FF:000023">
    <property type="entry name" value="Proline--tRNA ligase"/>
    <property type="match status" value="1"/>
</dbReference>
<dbReference type="Gene3D" id="3.40.50.800">
    <property type="entry name" value="Anticodon-binding domain"/>
    <property type="match status" value="1"/>
</dbReference>
<dbReference type="Gene3D" id="3.30.930.10">
    <property type="entry name" value="Bira Bifunctional Protein, Domain 2"/>
    <property type="match status" value="1"/>
</dbReference>
<dbReference type="Gene3D" id="3.30.110.30">
    <property type="entry name" value="C-terminal domain of ProRS"/>
    <property type="match status" value="1"/>
</dbReference>
<dbReference type="HAMAP" id="MF_01571">
    <property type="entry name" value="Pro_tRNA_synth_type3"/>
    <property type="match status" value="1"/>
</dbReference>
<dbReference type="InterPro" id="IPR002314">
    <property type="entry name" value="aa-tRNA-synt_IIb"/>
</dbReference>
<dbReference type="InterPro" id="IPR006195">
    <property type="entry name" value="aa-tRNA-synth_II"/>
</dbReference>
<dbReference type="InterPro" id="IPR045864">
    <property type="entry name" value="aa-tRNA-synth_II/BPL/LPL"/>
</dbReference>
<dbReference type="InterPro" id="IPR004154">
    <property type="entry name" value="Anticodon-bd"/>
</dbReference>
<dbReference type="InterPro" id="IPR036621">
    <property type="entry name" value="Anticodon-bd_dom_sf"/>
</dbReference>
<dbReference type="InterPro" id="IPR002316">
    <property type="entry name" value="Pro-tRNA-ligase_IIa"/>
</dbReference>
<dbReference type="InterPro" id="IPR004499">
    <property type="entry name" value="Pro-tRNA-ligase_IIa_arc-type"/>
</dbReference>
<dbReference type="InterPro" id="IPR016061">
    <property type="entry name" value="Pro-tRNA_ligase_II_C"/>
</dbReference>
<dbReference type="InterPro" id="IPR017449">
    <property type="entry name" value="Pro-tRNA_synth_II"/>
</dbReference>
<dbReference type="InterPro" id="IPR033721">
    <property type="entry name" value="ProRS_core_arch_euk"/>
</dbReference>
<dbReference type="NCBIfam" id="TIGR00408">
    <property type="entry name" value="proS_fam_I"/>
    <property type="match status" value="1"/>
</dbReference>
<dbReference type="PANTHER" id="PTHR43382:SF2">
    <property type="entry name" value="BIFUNCTIONAL GLUTAMATE_PROLINE--TRNA LIGASE"/>
    <property type="match status" value="1"/>
</dbReference>
<dbReference type="PANTHER" id="PTHR43382">
    <property type="entry name" value="PROLYL-TRNA SYNTHETASE"/>
    <property type="match status" value="1"/>
</dbReference>
<dbReference type="Pfam" id="PF03129">
    <property type="entry name" value="HGTP_anticodon"/>
    <property type="match status" value="1"/>
</dbReference>
<dbReference type="Pfam" id="PF09180">
    <property type="entry name" value="ProRS-C_1"/>
    <property type="match status" value="1"/>
</dbReference>
<dbReference type="Pfam" id="PF00587">
    <property type="entry name" value="tRNA-synt_2b"/>
    <property type="match status" value="1"/>
</dbReference>
<dbReference type="PRINTS" id="PR01046">
    <property type="entry name" value="TRNASYNTHPRO"/>
</dbReference>
<dbReference type="SMART" id="SM00946">
    <property type="entry name" value="ProRS-C_1"/>
    <property type="match status" value="1"/>
</dbReference>
<dbReference type="SUPFAM" id="SSF64586">
    <property type="entry name" value="C-terminal domain of ProRS"/>
    <property type="match status" value="1"/>
</dbReference>
<dbReference type="SUPFAM" id="SSF52954">
    <property type="entry name" value="Class II aaRS ABD-related"/>
    <property type="match status" value="1"/>
</dbReference>
<dbReference type="SUPFAM" id="SSF55681">
    <property type="entry name" value="Class II aaRS and biotin synthetases"/>
    <property type="match status" value="1"/>
</dbReference>
<dbReference type="PROSITE" id="PS50862">
    <property type="entry name" value="AA_TRNA_LIGASE_II"/>
    <property type="match status" value="1"/>
</dbReference>
<organism>
    <name type="scientific">Bacillus cereus (strain ATCC 14579 / DSM 31 / CCUG 7414 / JCM 2152 / NBRC 15305 / NCIMB 9373 / NCTC 2599 / NRRL B-3711)</name>
    <dbReference type="NCBI Taxonomy" id="226900"/>
    <lineage>
        <taxon>Bacteria</taxon>
        <taxon>Bacillati</taxon>
        <taxon>Bacillota</taxon>
        <taxon>Bacilli</taxon>
        <taxon>Bacillales</taxon>
        <taxon>Bacillaceae</taxon>
        <taxon>Bacillus</taxon>
        <taxon>Bacillus cereus group</taxon>
    </lineage>
</organism>
<name>SYP2_BACCR</name>
<evidence type="ECO:0000255" key="1">
    <source>
        <dbReference type="HAMAP-Rule" id="MF_01571"/>
    </source>
</evidence>